<name>PYRF_MOOTA</name>
<comment type="function">
    <text evidence="1">Catalyzes the decarboxylation of orotidine 5'-monophosphate (OMP) to uridine 5'-monophosphate (UMP).</text>
</comment>
<comment type="catalytic activity">
    <reaction evidence="1">
        <text>orotidine 5'-phosphate + H(+) = UMP + CO2</text>
        <dbReference type="Rhea" id="RHEA:11596"/>
        <dbReference type="ChEBI" id="CHEBI:15378"/>
        <dbReference type="ChEBI" id="CHEBI:16526"/>
        <dbReference type="ChEBI" id="CHEBI:57538"/>
        <dbReference type="ChEBI" id="CHEBI:57865"/>
        <dbReference type="EC" id="4.1.1.23"/>
    </reaction>
</comment>
<comment type="pathway">
    <text evidence="1">Pyrimidine metabolism; UMP biosynthesis via de novo pathway; UMP from orotate: step 2/2.</text>
</comment>
<comment type="subunit">
    <text evidence="1">Homodimer.</text>
</comment>
<comment type="similarity">
    <text evidence="1">Belongs to the OMP decarboxylase family. Type 1 subfamily.</text>
</comment>
<proteinExistence type="inferred from homology"/>
<protein>
    <recommendedName>
        <fullName evidence="1">Orotidine 5'-phosphate decarboxylase</fullName>
        <ecNumber evidence="1">4.1.1.23</ecNumber>
    </recommendedName>
    <alternativeName>
        <fullName evidence="1">OMP decarboxylase</fullName>
        <shortName evidence="1">OMPDCase</shortName>
        <shortName evidence="1">OMPdecase</shortName>
    </alternativeName>
</protein>
<reference key="1">
    <citation type="journal article" date="2008" name="Environ. Microbiol.">
        <title>The complete genome sequence of Moorella thermoacetica (f. Clostridium thermoaceticum).</title>
        <authorList>
            <person name="Pierce E."/>
            <person name="Xie G."/>
            <person name="Barabote R.D."/>
            <person name="Saunders E."/>
            <person name="Han C.S."/>
            <person name="Detter J.C."/>
            <person name="Richardson P."/>
            <person name="Brettin T.S."/>
            <person name="Das A."/>
            <person name="Ljungdahl L.G."/>
            <person name="Ragsdale S.W."/>
        </authorList>
    </citation>
    <scope>NUCLEOTIDE SEQUENCE [LARGE SCALE GENOMIC DNA]</scope>
    <source>
        <strain>ATCC 39073 / JCM 9320</strain>
    </source>
</reference>
<organism>
    <name type="scientific">Moorella thermoacetica (strain ATCC 39073 / JCM 9320)</name>
    <dbReference type="NCBI Taxonomy" id="264732"/>
    <lineage>
        <taxon>Bacteria</taxon>
        <taxon>Bacillati</taxon>
        <taxon>Bacillota</taxon>
        <taxon>Clostridia</taxon>
        <taxon>Moorellales</taxon>
        <taxon>Moorellaceae</taxon>
        <taxon>Moorella</taxon>
    </lineage>
</organism>
<keyword id="KW-0210">Decarboxylase</keyword>
<keyword id="KW-0456">Lyase</keyword>
<keyword id="KW-0665">Pyrimidine biosynthesis</keyword>
<sequence length="252" mass="26861">MPTLMYLQEMIRMHAKDKIIVALDVPDLAAGEKLVDRLSPYAGMFKVGLEFFTAAGPAAVRMVKERGGRVFADLKFHDIPNTVAGAARALVRLGVDMLNVHAAGGKAMLQAAAAAVREEAAALNRPAPVIIAVTVLTSLDREALRCEVGIEREVEEQVARWALLAREAGLDGVVASPREIRAIREACGPEFVIVTPGVRPAGSDRGDQRRVMTPAEALREGASYLVIGRPITAAPDPVAAARAIAAEIEMVK</sequence>
<feature type="chain" id="PRO_0000241877" description="Orotidine 5'-phosphate decarboxylase">
    <location>
        <begin position="1"/>
        <end position="252"/>
    </location>
</feature>
<feature type="active site" description="Proton donor" evidence="1">
    <location>
        <position position="75"/>
    </location>
</feature>
<feature type="binding site" evidence="1">
    <location>
        <position position="24"/>
    </location>
    <ligand>
        <name>substrate</name>
    </ligand>
</feature>
<feature type="binding site" evidence="1">
    <location>
        <position position="46"/>
    </location>
    <ligand>
        <name>substrate</name>
    </ligand>
</feature>
<feature type="binding site" evidence="1">
    <location>
        <begin position="73"/>
        <end position="82"/>
    </location>
    <ligand>
        <name>substrate</name>
    </ligand>
</feature>
<feature type="binding site" evidence="1">
    <location>
        <position position="137"/>
    </location>
    <ligand>
        <name>substrate</name>
    </ligand>
</feature>
<feature type="binding site" evidence="1">
    <location>
        <position position="199"/>
    </location>
    <ligand>
        <name>substrate</name>
    </ligand>
</feature>
<feature type="binding site" evidence="1">
    <location>
        <position position="208"/>
    </location>
    <ligand>
        <name>substrate</name>
    </ligand>
</feature>
<feature type="binding site" evidence="1">
    <location>
        <position position="228"/>
    </location>
    <ligand>
        <name>substrate</name>
    </ligand>
</feature>
<feature type="binding site" evidence="1">
    <location>
        <position position="229"/>
    </location>
    <ligand>
        <name>substrate</name>
    </ligand>
</feature>
<dbReference type="EC" id="4.1.1.23" evidence="1"/>
<dbReference type="EMBL" id="CP000232">
    <property type="protein sequence ID" value="ABC19200.1"/>
    <property type="molecule type" value="Genomic_DNA"/>
</dbReference>
<dbReference type="RefSeq" id="YP_429743.1">
    <property type="nucleotide sequence ID" value="NC_007644.1"/>
</dbReference>
<dbReference type="SMR" id="Q2RK39"/>
<dbReference type="STRING" id="264732.Moth_0883"/>
<dbReference type="EnsemblBacteria" id="ABC19200">
    <property type="protein sequence ID" value="ABC19200"/>
    <property type="gene ID" value="Moth_0883"/>
</dbReference>
<dbReference type="KEGG" id="mta:Moth_0883"/>
<dbReference type="PATRIC" id="fig|264732.11.peg.948"/>
<dbReference type="eggNOG" id="COG0284">
    <property type="taxonomic scope" value="Bacteria"/>
</dbReference>
<dbReference type="HOGENOM" id="CLU_067069_1_0_9"/>
<dbReference type="OrthoDB" id="9806203at2"/>
<dbReference type="UniPathway" id="UPA00070">
    <property type="reaction ID" value="UER00120"/>
</dbReference>
<dbReference type="GO" id="GO:0005829">
    <property type="term" value="C:cytosol"/>
    <property type="evidence" value="ECO:0007669"/>
    <property type="project" value="TreeGrafter"/>
</dbReference>
<dbReference type="GO" id="GO:0004590">
    <property type="term" value="F:orotidine-5'-phosphate decarboxylase activity"/>
    <property type="evidence" value="ECO:0007669"/>
    <property type="project" value="UniProtKB-UniRule"/>
</dbReference>
<dbReference type="GO" id="GO:0006207">
    <property type="term" value="P:'de novo' pyrimidine nucleobase biosynthetic process"/>
    <property type="evidence" value="ECO:0007669"/>
    <property type="project" value="InterPro"/>
</dbReference>
<dbReference type="GO" id="GO:0044205">
    <property type="term" value="P:'de novo' UMP biosynthetic process"/>
    <property type="evidence" value="ECO:0007669"/>
    <property type="project" value="UniProtKB-UniRule"/>
</dbReference>
<dbReference type="CDD" id="cd04725">
    <property type="entry name" value="OMP_decarboxylase_like"/>
    <property type="match status" value="1"/>
</dbReference>
<dbReference type="FunFam" id="3.20.20.70:FF:000015">
    <property type="entry name" value="Orotidine 5'-phosphate decarboxylase"/>
    <property type="match status" value="1"/>
</dbReference>
<dbReference type="Gene3D" id="3.20.20.70">
    <property type="entry name" value="Aldolase class I"/>
    <property type="match status" value="1"/>
</dbReference>
<dbReference type="HAMAP" id="MF_01200_B">
    <property type="entry name" value="OMPdecase_type1_B"/>
    <property type="match status" value="1"/>
</dbReference>
<dbReference type="InterPro" id="IPR013785">
    <property type="entry name" value="Aldolase_TIM"/>
</dbReference>
<dbReference type="InterPro" id="IPR014732">
    <property type="entry name" value="OMPdecase"/>
</dbReference>
<dbReference type="InterPro" id="IPR018089">
    <property type="entry name" value="OMPdecase_AS"/>
</dbReference>
<dbReference type="InterPro" id="IPR047596">
    <property type="entry name" value="OMPdecase_bac"/>
</dbReference>
<dbReference type="InterPro" id="IPR001754">
    <property type="entry name" value="OMPdeCOase_dom"/>
</dbReference>
<dbReference type="InterPro" id="IPR011060">
    <property type="entry name" value="RibuloseP-bd_barrel"/>
</dbReference>
<dbReference type="NCBIfam" id="NF001273">
    <property type="entry name" value="PRK00230.1"/>
    <property type="match status" value="1"/>
</dbReference>
<dbReference type="NCBIfam" id="TIGR01740">
    <property type="entry name" value="pyrF"/>
    <property type="match status" value="1"/>
</dbReference>
<dbReference type="PANTHER" id="PTHR32119">
    <property type="entry name" value="OROTIDINE 5'-PHOSPHATE DECARBOXYLASE"/>
    <property type="match status" value="1"/>
</dbReference>
<dbReference type="PANTHER" id="PTHR32119:SF2">
    <property type="entry name" value="OROTIDINE 5'-PHOSPHATE DECARBOXYLASE"/>
    <property type="match status" value="1"/>
</dbReference>
<dbReference type="Pfam" id="PF00215">
    <property type="entry name" value="OMPdecase"/>
    <property type="match status" value="1"/>
</dbReference>
<dbReference type="SMART" id="SM00934">
    <property type="entry name" value="OMPdecase"/>
    <property type="match status" value="1"/>
</dbReference>
<dbReference type="SUPFAM" id="SSF51366">
    <property type="entry name" value="Ribulose-phoshate binding barrel"/>
    <property type="match status" value="1"/>
</dbReference>
<dbReference type="PROSITE" id="PS00156">
    <property type="entry name" value="OMPDECASE"/>
    <property type="match status" value="1"/>
</dbReference>
<gene>
    <name evidence="1" type="primary">pyrF</name>
    <name type="ordered locus">Moth_0883</name>
</gene>
<evidence type="ECO:0000255" key="1">
    <source>
        <dbReference type="HAMAP-Rule" id="MF_01200"/>
    </source>
</evidence>
<accession>Q2RK39</accession>